<dbReference type="EC" id="2.4.1.227" evidence="1"/>
<dbReference type="EMBL" id="CP001348">
    <property type="protein sequence ID" value="ACL74865.1"/>
    <property type="molecule type" value="Genomic_DNA"/>
</dbReference>
<dbReference type="RefSeq" id="WP_012634927.1">
    <property type="nucleotide sequence ID" value="NC_011898.1"/>
</dbReference>
<dbReference type="SMR" id="B8I6H3"/>
<dbReference type="STRING" id="394503.Ccel_0483"/>
<dbReference type="CAZy" id="GT28">
    <property type="family name" value="Glycosyltransferase Family 28"/>
</dbReference>
<dbReference type="KEGG" id="cce:Ccel_0483"/>
<dbReference type="eggNOG" id="COG0707">
    <property type="taxonomic scope" value="Bacteria"/>
</dbReference>
<dbReference type="HOGENOM" id="CLU_037404_0_1_9"/>
<dbReference type="OrthoDB" id="9808936at2"/>
<dbReference type="UniPathway" id="UPA00219"/>
<dbReference type="Proteomes" id="UP000001349">
    <property type="component" value="Chromosome"/>
</dbReference>
<dbReference type="GO" id="GO:0005886">
    <property type="term" value="C:plasma membrane"/>
    <property type="evidence" value="ECO:0007669"/>
    <property type="project" value="UniProtKB-SubCell"/>
</dbReference>
<dbReference type="GO" id="GO:0051991">
    <property type="term" value="F:UDP-N-acetyl-D-glucosamine:N-acetylmuramoyl-L-alanyl-D-glutamyl-meso-2,6-diaminopimelyl-D-alanyl-D-alanine-diphosphoundecaprenol 4-beta-N-acetylglucosaminlytransferase activity"/>
    <property type="evidence" value="ECO:0007669"/>
    <property type="project" value="RHEA"/>
</dbReference>
<dbReference type="GO" id="GO:0050511">
    <property type="term" value="F:undecaprenyldiphospho-muramoylpentapeptide beta-N-acetylglucosaminyltransferase activity"/>
    <property type="evidence" value="ECO:0007669"/>
    <property type="project" value="UniProtKB-UniRule"/>
</dbReference>
<dbReference type="GO" id="GO:0005975">
    <property type="term" value="P:carbohydrate metabolic process"/>
    <property type="evidence" value="ECO:0007669"/>
    <property type="project" value="InterPro"/>
</dbReference>
<dbReference type="GO" id="GO:0051301">
    <property type="term" value="P:cell division"/>
    <property type="evidence" value="ECO:0007669"/>
    <property type="project" value="UniProtKB-KW"/>
</dbReference>
<dbReference type="GO" id="GO:0071555">
    <property type="term" value="P:cell wall organization"/>
    <property type="evidence" value="ECO:0007669"/>
    <property type="project" value="UniProtKB-KW"/>
</dbReference>
<dbReference type="GO" id="GO:0030259">
    <property type="term" value="P:lipid glycosylation"/>
    <property type="evidence" value="ECO:0007669"/>
    <property type="project" value="UniProtKB-UniRule"/>
</dbReference>
<dbReference type="GO" id="GO:0009252">
    <property type="term" value="P:peptidoglycan biosynthetic process"/>
    <property type="evidence" value="ECO:0007669"/>
    <property type="project" value="UniProtKB-UniRule"/>
</dbReference>
<dbReference type="GO" id="GO:0008360">
    <property type="term" value="P:regulation of cell shape"/>
    <property type="evidence" value="ECO:0007669"/>
    <property type="project" value="UniProtKB-KW"/>
</dbReference>
<dbReference type="CDD" id="cd03785">
    <property type="entry name" value="GT28_MurG"/>
    <property type="match status" value="1"/>
</dbReference>
<dbReference type="Gene3D" id="3.40.50.2000">
    <property type="entry name" value="Glycogen Phosphorylase B"/>
    <property type="match status" value="2"/>
</dbReference>
<dbReference type="HAMAP" id="MF_00033">
    <property type="entry name" value="MurG"/>
    <property type="match status" value="1"/>
</dbReference>
<dbReference type="InterPro" id="IPR006009">
    <property type="entry name" value="GlcNAc_MurG"/>
</dbReference>
<dbReference type="InterPro" id="IPR007235">
    <property type="entry name" value="Glyco_trans_28_C"/>
</dbReference>
<dbReference type="InterPro" id="IPR004276">
    <property type="entry name" value="GlycoTrans_28_N"/>
</dbReference>
<dbReference type="NCBIfam" id="TIGR01133">
    <property type="entry name" value="murG"/>
    <property type="match status" value="1"/>
</dbReference>
<dbReference type="PANTHER" id="PTHR21015:SF22">
    <property type="entry name" value="GLYCOSYLTRANSFERASE"/>
    <property type="match status" value="1"/>
</dbReference>
<dbReference type="PANTHER" id="PTHR21015">
    <property type="entry name" value="UDP-N-ACETYLGLUCOSAMINE--N-ACETYLMURAMYL-(PENTAPEPTIDE) PYROPHOSPHORYL-UNDECAPRENOL N-ACETYLGLUCOSAMINE TRANSFERASE 1"/>
    <property type="match status" value="1"/>
</dbReference>
<dbReference type="Pfam" id="PF04101">
    <property type="entry name" value="Glyco_tran_28_C"/>
    <property type="match status" value="1"/>
</dbReference>
<dbReference type="Pfam" id="PF03033">
    <property type="entry name" value="Glyco_transf_28"/>
    <property type="match status" value="1"/>
</dbReference>
<dbReference type="SUPFAM" id="SSF53756">
    <property type="entry name" value="UDP-Glycosyltransferase/glycogen phosphorylase"/>
    <property type="match status" value="1"/>
</dbReference>
<name>MURG_RUMCH</name>
<sequence length="364" mass="40303">MKVLIAGGGTGGHINPGLAIAKYIKQKEAEADITFVGTKKGLETKLVPREGYPLETITVRGFKRKLSLDTLIAIKELIQSFFQASRLLKRIKPDVVIGTGGYVCGPVLYMAAKKGIPTLIHESNAFPGVTNRLLERYVSYVAISFKDAEKYFKNKKKLVLTGNPVREELLNSGRDKVASNLGIVEGKPLIVAMGGSRGARRINETIADMLNNYFKGEFNLIFATGEAQFDDISSTVKIDEKYRDMVKVVPYIYNVDQVYVASDLMICRAGAITISELQVMGIPSILIPSPYVTANHQEHNARSLERDGGAVVILENELNADLLYKQICSLIFNKDVLKKMSKNTSKNRVTDSAEKIYHLIKEII</sequence>
<accession>B8I6H3</accession>
<proteinExistence type="inferred from homology"/>
<keyword id="KW-0131">Cell cycle</keyword>
<keyword id="KW-0132">Cell division</keyword>
<keyword id="KW-1003">Cell membrane</keyword>
<keyword id="KW-0133">Cell shape</keyword>
<keyword id="KW-0961">Cell wall biogenesis/degradation</keyword>
<keyword id="KW-0328">Glycosyltransferase</keyword>
<keyword id="KW-0472">Membrane</keyword>
<keyword id="KW-0573">Peptidoglycan synthesis</keyword>
<keyword id="KW-1185">Reference proteome</keyword>
<keyword id="KW-0808">Transferase</keyword>
<protein>
    <recommendedName>
        <fullName evidence="1">UDP-N-acetylglucosamine--N-acetylmuramyl-(pentapeptide) pyrophosphoryl-undecaprenol N-acetylglucosamine transferase</fullName>
        <ecNumber evidence="1">2.4.1.227</ecNumber>
    </recommendedName>
    <alternativeName>
        <fullName evidence="1">Undecaprenyl-PP-MurNAc-pentapeptide-UDPGlcNAc GlcNAc transferase</fullName>
    </alternativeName>
</protein>
<gene>
    <name evidence="1" type="primary">murG</name>
    <name type="ordered locus">Ccel_0483</name>
</gene>
<reference key="1">
    <citation type="submission" date="2009-01" db="EMBL/GenBank/DDBJ databases">
        <title>Complete sequence of Clostridium cellulolyticum H10.</title>
        <authorList>
            <consortium name="US DOE Joint Genome Institute"/>
            <person name="Lucas S."/>
            <person name="Copeland A."/>
            <person name="Lapidus A."/>
            <person name="Glavina del Rio T."/>
            <person name="Dalin E."/>
            <person name="Tice H."/>
            <person name="Bruce D."/>
            <person name="Goodwin L."/>
            <person name="Pitluck S."/>
            <person name="Chertkov O."/>
            <person name="Saunders E."/>
            <person name="Brettin T."/>
            <person name="Detter J.C."/>
            <person name="Han C."/>
            <person name="Larimer F."/>
            <person name="Land M."/>
            <person name="Hauser L."/>
            <person name="Kyrpides N."/>
            <person name="Ivanova N."/>
            <person name="Zhou J."/>
            <person name="Richardson P."/>
        </authorList>
    </citation>
    <scope>NUCLEOTIDE SEQUENCE [LARGE SCALE GENOMIC DNA]</scope>
    <source>
        <strain>ATCC 35319 / DSM 5812 / JCM 6584 / H10</strain>
    </source>
</reference>
<feature type="chain" id="PRO_1000192124" description="UDP-N-acetylglucosamine--N-acetylmuramyl-(pentapeptide) pyrophosphoryl-undecaprenol N-acetylglucosamine transferase">
    <location>
        <begin position="1"/>
        <end position="364"/>
    </location>
</feature>
<feature type="binding site" evidence="1">
    <location>
        <begin position="10"/>
        <end position="12"/>
    </location>
    <ligand>
        <name>UDP-N-acetyl-alpha-D-glucosamine</name>
        <dbReference type="ChEBI" id="CHEBI:57705"/>
    </ligand>
</feature>
<feature type="binding site" evidence="1">
    <location>
        <position position="124"/>
    </location>
    <ligand>
        <name>UDP-N-acetyl-alpha-D-glucosamine</name>
        <dbReference type="ChEBI" id="CHEBI:57705"/>
    </ligand>
</feature>
<feature type="binding site" evidence="1">
    <location>
        <position position="166"/>
    </location>
    <ligand>
        <name>UDP-N-acetyl-alpha-D-glucosamine</name>
        <dbReference type="ChEBI" id="CHEBI:57705"/>
    </ligand>
</feature>
<feature type="binding site" evidence="1">
    <location>
        <position position="196"/>
    </location>
    <ligand>
        <name>UDP-N-acetyl-alpha-D-glucosamine</name>
        <dbReference type="ChEBI" id="CHEBI:57705"/>
    </ligand>
</feature>
<feature type="binding site" evidence="1">
    <location>
        <position position="252"/>
    </location>
    <ligand>
        <name>UDP-N-acetyl-alpha-D-glucosamine</name>
        <dbReference type="ChEBI" id="CHEBI:57705"/>
    </ligand>
</feature>
<feature type="binding site" evidence="1">
    <location>
        <position position="297"/>
    </location>
    <ligand>
        <name>UDP-N-acetyl-alpha-D-glucosamine</name>
        <dbReference type="ChEBI" id="CHEBI:57705"/>
    </ligand>
</feature>
<evidence type="ECO:0000255" key="1">
    <source>
        <dbReference type="HAMAP-Rule" id="MF_00033"/>
    </source>
</evidence>
<organism>
    <name type="scientific">Ruminiclostridium cellulolyticum (strain ATCC 35319 / DSM 5812 / JCM 6584 / H10)</name>
    <name type="common">Clostridium cellulolyticum</name>
    <dbReference type="NCBI Taxonomy" id="394503"/>
    <lineage>
        <taxon>Bacteria</taxon>
        <taxon>Bacillati</taxon>
        <taxon>Bacillota</taxon>
        <taxon>Clostridia</taxon>
        <taxon>Eubacteriales</taxon>
        <taxon>Oscillospiraceae</taxon>
        <taxon>Ruminiclostridium</taxon>
    </lineage>
</organism>
<comment type="function">
    <text evidence="1">Cell wall formation. Catalyzes the transfer of a GlcNAc subunit on undecaprenyl-pyrophosphoryl-MurNAc-pentapeptide (lipid intermediate I) to form undecaprenyl-pyrophosphoryl-MurNAc-(pentapeptide)GlcNAc (lipid intermediate II).</text>
</comment>
<comment type="catalytic activity">
    <reaction evidence="1">
        <text>di-trans,octa-cis-undecaprenyl diphospho-N-acetyl-alpha-D-muramoyl-L-alanyl-D-glutamyl-meso-2,6-diaminopimeloyl-D-alanyl-D-alanine + UDP-N-acetyl-alpha-D-glucosamine = di-trans,octa-cis-undecaprenyl diphospho-[N-acetyl-alpha-D-glucosaminyl-(1-&gt;4)]-N-acetyl-alpha-D-muramoyl-L-alanyl-D-glutamyl-meso-2,6-diaminopimeloyl-D-alanyl-D-alanine + UDP + H(+)</text>
        <dbReference type="Rhea" id="RHEA:31227"/>
        <dbReference type="ChEBI" id="CHEBI:15378"/>
        <dbReference type="ChEBI" id="CHEBI:57705"/>
        <dbReference type="ChEBI" id="CHEBI:58223"/>
        <dbReference type="ChEBI" id="CHEBI:61387"/>
        <dbReference type="ChEBI" id="CHEBI:61388"/>
        <dbReference type="EC" id="2.4.1.227"/>
    </reaction>
</comment>
<comment type="pathway">
    <text evidence="1">Cell wall biogenesis; peptidoglycan biosynthesis.</text>
</comment>
<comment type="subcellular location">
    <subcellularLocation>
        <location evidence="1">Cell membrane</location>
        <topology evidence="1">Peripheral membrane protein</topology>
        <orientation evidence="1">Cytoplasmic side</orientation>
    </subcellularLocation>
</comment>
<comment type="similarity">
    <text evidence="1">Belongs to the glycosyltransferase 28 family. MurG subfamily.</text>
</comment>